<organism>
    <name type="scientific">Escherichia coli O157:H7</name>
    <dbReference type="NCBI Taxonomy" id="83334"/>
    <lineage>
        <taxon>Bacteria</taxon>
        <taxon>Pseudomonadati</taxon>
        <taxon>Pseudomonadota</taxon>
        <taxon>Gammaproteobacteria</taxon>
        <taxon>Enterobacterales</taxon>
        <taxon>Enterobacteriaceae</taxon>
        <taxon>Escherichia</taxon>
    </lineage>
</organism>
<protein>
    <recommendedName>
        <fullName evidence="2">Large ribosomal subunit protein uL2</fullName>
    </recommendedName>
    <alternativeName>
        <fullName evidence="4">50S ribosomal protein L2</fullName>
    </alternativeName>
</protein>
<accession>P60424</accession>
<accession>P02387</accession>
<proteinExistence type="inferred from homology"/>
<keyword id="KW-0007">Acetylation</keyword>
<keyword id="KW-1185">Reference proteome</keyword>
<keyword id="KW-0687">Ribonucleoprotein</keyword>
<keyword id="KW-0689">Ribosomal protein</keyword>
<keyword id="KW-0694">RNA-binding</keyword>
<keyword id="KW-0699">rRNA-binding</keyword>
<gene>
    <name evidence="2" type="primary">rplB</name>
    <name type="ordered locus">Z4688</name>
    <name type="ordered locus">ECs4182</name>
</gene>
<reference key="1">
    <citation type="journal article" date="2001" name="Nature">
        <title>Genome sequence of enterohaemorrhagic Escherichia coli O157:H7.</title>
        <authorList>
            <person name="Perna N.T."/>
            <person name="Plunkett G. III"/>
            <person name="Burland V."/>
            <person name="Mau B."/>
            <person name="Glasner J.D."/>
            <person name="Rose D.J."/>
            <person name="Mayhew G.F."/>
            <person name="Evans P.S."/>
            <person name="Gregor J."/>
            <person name="Kirkpatrick H.A."/>
            <person name="Posfai G."/>
            <person name="Hackett J."/>
            <person name="Klink S."/>
            <person name="Boutin A."/>
            <person name="Shao Y."/>
            <person name="Miller L."/>
            <person name="Grotbeck E.J."/>
            <person name="Davis N.W."/>
            <person name="Lim A."/>
            <person name="Dimalanta E.T."/>
            <person name="Potamousis K."/>
            <person name="Apodaca J."/>
            <person name="Anantharaman T.S."/>
            <person name="Lin J."/>
            <person name="Yen G."/>
            <person name="Schwartz D.C."/>
            <person name="Welch R.A."/>
            <person name="Blattner F.R."/>
        </authorList>
    </citation>
    <scope>NUCLEOTIDE SEQUENCE [LARGE SCALE GENOMIC DNA]</scope>
    <source>
        <strain>O157:H7 / EDL933 / ATCC 700927 / EHEC</strain>
    </source>
</reference>
<reference key="2">
    <citation type="journal article" date="2001" name="DNA Res.">
        <title>Complete genome sequence of enterohemorrhagic Escherichia coli O157:H7 and genomic comparison with a laboratory strain K-12.</title>
        <authorList>
            <person name="Hayashi T."/>
            <person name="Makino K."/>
            <person name="Ohnishi M."/>
            <person name="Kurokawa K."/>
            <person name="Ishii K."/>
            <person name="Yokoyama K."/>
            <person name="Han C.-G."/>
            <person name="Ohtsubo E."/>
            <person name="Nakayama K."/>
            <person name="Murata T."/>
            <person name="Tanaka M."/>
            <person name="Tobe T."/>
            <person name="Iida T."/>
            <person name="Takami H."/>
            <person name="Honda T."/>
            <person name="Sasakawa C."/>
            <person name="Ogasawara N."/>
            <person name="Yasunaga T."/>
            <person name="Kuhara S."/>
            <person name="Shiba T."/>
            <person name="Hattori M."/>
            <person name="Shinagawa H."/>
        </authorList>
    </citation>
    <scope>NUCLEOTIDE SEQUENCE [LARGE SCALE GENOMIC DNA]</scope>
    <source>
        <strain>O157:H7 / Sakai / RIMD 0509952 / EHEC</strain>
    </source>
</reference>
<name>RL2_ECO57</name>
<comment type="function">
    <text evidence="2">One of the primary rRNA binding proteins. Required for association of the 30S and 50S subunits to form the 70S ribosome, for tRNA binding and peptide bond formation. It has been suggested to have peptidyltransferase activity; this is somewhat controversial. Makes several contacts with the 16S rRNA in the 70S ribosome.</text>
</comment>
<comment type="subunit">
    <text evidence="2">Part of the 50S ribosomal subunit. Forms a bridge to the 30S subunit in the 70S ribosome.</text>
</comment>
<comment type="similarity">
    <text evidence="2">Belongs to the universal ribosomal protein uL2 family.</text>
</comment>
<feature type="initiator methionine" description="Removed" evidence="1">
    <location>
        <position position="1"/>
    </location>
</feature>
<feature type="chain" id="PRO_0000129561" description="Large ribosomal subunit protein uL2">
    <location>
        <begin position="2"/>
        <end position="273"/>
    </location>
</feature>
<feature type="region of interest" description="Disordered" evidence="3">
    <location>
        <begin position="28"/>
        <end position="53"/>
    </location>
</feature>
<feature type="region of interest" description="Disordered" evidence="3">
    <location>
        <begin position="221"/>
        <end position="273"/>
    </location>
</feature>
<feature type="compositionally biased region" description="Low complexity" evidence="3">
    <location>
        <begin position="39"/>
        <end position="48"/>
    </location>
</feature>
<feature type="modified residue" description="N6-acetyllysine" evidence="2">
    <location>
        <position position="242"/>
    </location>
</feature>
<evidence type="ECO:0000250" key="1"/>
<evidence type="ECO:0000255" key="2">
    <source>
        <dbReference type="HAMAP-Rule" id="MF_01320"/>
    </source>
</evidence>
<evidence type="ECO:0000256" key="3">
    <source>
        <dbReference type="SAM" id="MobiDB-lite"/>
    </source>
</evidence>
<evidence type="ECO:0000305" key="4"/>
<sequence>MAVVKCKPTSPGRRHVVKVVNPELHKGKPFAPLLEKNSKSGGRNNNGRITTRHIGGGHKQAYRIVDFKRNKDGIPAVVERLEYDPNRSANIALVLYKDGERRYILAPKGLKAGDQIQSGVDAAIKPGNTLPMRNIPVGSTVHNVEMKPGKGGQLARSAGTYVQIVARDGAYVTLRLRSGEMRKVEADCRATLGEVGNAEHMLRVLGKAGAARWRGVRPTVRGTAMNPVDHPHGGGEGRNFGKHPVTPWGVQTKGKKTRSNKRTDKFIVRRRSK</sequence>
<dbReference type="EMBL" id="AE005174">
    <property type="protein sequence ID" value="AAG58438.1"/>
    <property type="molecule type" value="Genomic_DNA"/>
</dbReference>
<dbReference type="EMBL" id="BA000007">
    <property type="protein sequence ID" value="BAB37605.1"/>
    <property type="molecule type" value="Genomic_DNA"/>
</dbReference>
<dbReference type="PIR" id="B85997">
    <property type="entry name" value="B85997"/>
</dbReference>
<dbReference type="PIR" id="F91151">
    <property type="entry name" value="F91151"/>
</dbReference>
<dbReference type="RefSeq" id="NP_312209.1">
    <property type="nucleotide sequence ID" value="NC_002695.1"/>
</dbReference>
<dbReference type="RefSeq" id="WP_000301864.1">
    <property type="nucleotide sequence ID" value="NZ_VOAI01000041.1"/>
</dbReference>
<dbReference type="SMR" id="P60424"/>
<dbReference type="STRING" id="155864.Z4688"/>
<dbReference type="GeneID" id="915966"/>
<dbReference type="GeneID" id="93778670"/>
<dbReference type="KEGG" id="ece:Z4688"/>
<dbReference type="KEGG" id="ecs:ECs_4182"/>
<dbReference type="PATRIC" id="fig|386585.9.peg.4365"/>
<dbReference type="eggNOG" id="COG0090">
    <property type="taxonomic scope" value="Bacteria"/>
</dbReference>
<dbReference type="HOGENOM" id="CLU_036235_2_1_6"/>
<dbReference type="OMA" id="GGRHPCT"/>
<dbReference type="Proteomes" id="UP000000558">
    <property type="component" value="Chromosome"/>
</dbReference>
<dbReference type="Proteomes" id="UP000002519">
    <property type="component" value="Chromosome"/>
</dbReference>
<dbReference type="GO" id="GO:0005829">
    <property type="term" value="C:cytosol"/>
    <property type="evidence" value="ECO:0007669"/>
    <property type="project" value="UniProtKB-ARBA"/>
</dbReference>
<dbReference type="GO" id="GO:0015934">
    <property type="term" value="C:large ribosomal subunit"/>
    <property type="evidence" value="ECO:0007669"/>
    <property type="project" value="InterPro"/>
</dbReference>
<dbReference type="GO" id="GO:0019843">
    <property type="term" value="F:rRNA binding"/>
    <property type="evidence" value="ECO:0007669"/>
    <property type="project" value="UniProtKB-UniRule"/>
</dbReference>
<dbReference type="GO" id="GO:0003735">
    <property type="term" value="F:structural constituent of ribosome"/>
    <property type="evidence" value="ECO:0007669"/>
    <property type="project" value="InterPro"/>
</dbReference>
<dbReference type="GO" id="GO:0016740">
    <property type="term" value="F:transferase activity"/>
    <property type="evidence" value="ECO:0007669"/>
    <property type="project" value="InterPro"/>
</dbReference>
<dbReference type="GO" id="GO:0002181">
    <property type="term" value="P:cytoplasmic translation"/>
    <property type="evidence" value="ECO:0007669"/>
    <property type="project" value="TreeGrafter"/>
</dbReference>
<dbReference type="FunFam" id="2.30.30.30:FF:000001">
    <property type="entry name" value="50S ribosomal protein L2"/>
    <property type="match status" value="1"/>
</dbReference>
<dbReference type="FunFam" id="2.40.50.140:FF:000003">
    <property type="entry name" value="50S ribosomal protein L2"/>
    <property type="match status" value="1"/>
</dbReference>
<dbReference type="FunFam" id="4.10.950.10:FF:000001">
    <property type="entry name" value="50S ribosomal protein L2"/>
    <property type="match status" value="1"/>
</dbReference>
<dbReference type="Gene3D" id="2.30.30.30">
    <property type="match status" value="1"/>
</dbReference>
<dbReference type="Gene3D" id="2.40.50.140">
    <property type="entry name" value="Nucleic acid-binding proteins"/>
    <property type="match status" value="1"/>
</dbReference>
<dbReference type="Gene3D" id="4.10.950.10">
    <property type="entry name" value="Ribosomal protein L2, domain 3"/>
    <property type="match status" value="1"/>
</dbReference>
<dbReference type="HAMAP" id="MF_01320_B">
    <property type="entry name" value="Ribosomal_uL2_B"/>
    <property type="match status" value="1"/>
</dbReference>
<dbReference type="InterPro" id="IPR012340">
    <property type="entry name" value="NA-bd_OB-fold"/>
</dbReference>
<dbReference type="InterPro" id="IPR014722">
    <property type="entry name" value="Rib_uL2_dom2"/>
</dbReference>
<dbReference type="InterPro" id="IPR002171">
    <property type="entry name" value="Ribosomal_uL2"/>
</dbReference>
<dbReference type="InterPro" id="IPR005880">
    <property type="entry name" value="Ribosomal_uL2_bac/org-type"/>
</dbReference>
<dbReference type="InterPro" id="IPR022669">
    <property type="entry name" value="Ribosomal_uL2_C"/>
</dbReference>
<dbReference type="InterPro" id="IPR022671">
    <property type="entry name" value="Ribosomal_uL2_CS"/>
</dbReference>
<dbReference type="InterPro" id="IPR014726">
    <property type="entry name" value="Ribosomal_uL2_dom3"/>
</dbReference>
<dbReference type="InterPro" id="IPR022666">
    <property type="entry name" value="Ribosomal_uL2_RNA-bd_dom"/>
</dbReference>
<dbReference type="InterPro" id="IPR008991">
    <property type="entry name" value="Translation_prot_SH3-like_sf"/>
</dbReference>
<dbReference type="NCBIfam" id="TIGR01171">
    <property type="entry name" value="rplB_bact"/>
    <property type="match status" value="1"/>
</dbReference>
<dbReference type="PANTHER" id="PTHR13691:SF5">
    <property type="entry name" value="LARGE RIBOSOMAL SUBUNIT PROTEIN UL2M"/>
    <property type="match status" value="1"/>
</dbReference>
<dbReference type="PANTHER" id="PTHR13691">
    <property type="entry name" value="RIBOSOMAL PROTEIN L2"/>
    <property type="match status" value="1"/>
</dbReference>
<dbReference type="Pfam" id="PF00181">
    <property type="entry name" value="Ribosomal_L2"/>
    <property type="match status" value="1"/>
</dbReference>
<dbReference type="Pfam" id="PF03947">
    <property type="entry name" value="Ribosomal_L2_C"/>
    <property type="match status" value="1"/>
</dbReference>
<dbReference type="PIRSF" id="PIRSF002158">
    <property type="entry name" value="Ribosomal_L2"/>
    <property type="match status" value="1"/>
</dbReference>
<dbReference type="SMART" id="SM01383">
    <property type="entry name" value="Ribosomal_L2"/>
    <property type="match status" value="1"/>
</dbReference>
<dbReference type="SMART" id="SM01382">
    <property type="entry name" value="Ribosomal_L2_C"/>
    <property type="match status" value="1"/>
</dbReference>
<dbReference type="SUPFAM" id="SSF50249">
    <property type="entry name" value="Nucleic acid-binding proteins"/>
    <property type="match status" value="1"/>
</dbReference>
<dbReference type="SUPFAM" id="SSF50104">
    <property type="entry name" value="Translation proteins SH3-like domain"/>
    <property type="match status" value="1"/>
</dbReference>
<dbReference type="PROSITE" id="PS00467">
    <property type="entry name" value="RIBOSOMAL_L2"/>
    <property type="match status" value="1"/>
</dbReference>